<reference key="1">
    <citation type="journal article" date="2004" name="Science">
        <title>The genomic sequence of the accidental pathogen Legionella pneumophila.</title>
        <authorList>
            <person name="Chien M."/>
            <person name="Morozova I."/>
            <person name="Shi S."/>
            <person name="Sheng H."/>
            <person name="Chen J."/>
            <person name="Gomez S.M."/>
            <person name="Asamani G."/>
            <person name="Hill K."/>
            <person name="Nuara J."/>
            <person name="Feder M."/>
            <person name="Rineer J."/>
            <person name="Greenberg J.J."/>
            <person name="Steshenko V."/>
            <person name="Park S.H."/>
            <person name="Zhao B."/>
            <person name="Teplitskaya E."/>
            <person name="Edwards J.R."/>
            <person name="Pampou S."/>
            <person name="Georghiou A."/>
            <person name="Chou I.-C."/>
            <person name="Iannuccilli W."/>
            <person name="Ulz M.E."/>
            <person name="Kim D.H."/>
            <person name="Geringer-Sameth A."/>
            <person name="Goldsberry C."/>
            <person name="Morozov P."/>
            <person name="Fischer S.G."/>
            <person name="Segal G."/>
            <person name="Qu X."/>
            <person name="Rzhetsky A."/>
            <person name="Zhang P."/>
            <person name="Cayanis E."/>
            <person name="De Jong P.J."/>
            <person name="Ju J."/>
            <person name="Kalachikov S."/>
            <person name="Shuman H.A."/>
            <person name="Russo J.J."/>
        </authorList>
    </citation>
    <scope>NUCLEOTIDE SEQUENCE [LARGE SCALE GENOMIC DNA]</scope>
    <source>
        <strain>Philadelphia 1 / ATCC 33152 / DSM 7513</strain>
    </source>
</reference>
<evidence type="ECO:0000255" key="1">
    <source>
        <dbReference type="HAMAP-Rule" id="MF_00036"/>
    </source>
</evidence>
<accession>Q5ZUJ9</accession>
<gene>
    <name evidence="1" type="primary">alaS</name>
    <name type="ordered locus">lpg1799</name>
</gene>
<sequence>MKSSEIRQAFLNYFVQRGHQIVASSSLVPSNDPTLLFTNAGMVQFKDLFLGLETRSYQRAATAQRCVRAGGKHNDLENVGYTARHHTFFEMLGNFSFGDYFKREAIQYAWEFLTEVLHIPAERLWVTVYKEDLEAEDIWLKEMKVSPERFSRCGEKDNFWSMGDTGPCGPCTEIFYDHGPEVAGGPPGSPDEDGDRYIEIWNLVFMQFNRDREGHLHPLPKPSVDTGMGLERLAAVIQGVHSNYEIDSFQYLIKAIAQLGQDIDLNHTSLKVIADHIRSCSFLIVDGVLPSNEGRGYVLRRIIRRAVRHGNKLGLPSPFFSKLVQPLIDVMGDAYPELINSKAHIERILQQEENQFTRTLEQGLRLLQDHIKNLQGQELSGEVAFKLYDTYGFPIDLTADIIREQGLHIDMEAFNQLMQQQREQSQAASQFTTDYHAVSQLDHQSEFHGYEKESMEAKIIGLLQEGNEVKSINKGAKGAVILDHTPFYAESGGQVGDKGLLIGKEFTFQVDDTQKVGQAVVHYGKVIKGELTLDLLIHAQVDNIRRDAIRLNHTATHLLHAALKKIVGQHVQQRGSLVDAERARFDFSHFEALTPQQIQQIEEVVNAQIRANNEVITQVMDIESAKQSGAVALFGEKYSDAVRVLSMGDFSKELCGGTHARRTGDIGLFKIVAEYGIASGIRRIEMVTGRYALAWVNEQLGFMNNLAATLKTTPNSLQEKVSQLLLDNKNQEKMIAKLLSEKAQKSGADILGEIEEIKGINLLIKQLEGMDSQTMRHTMDQLKSRIDSAVIILFTIEQNKMNVIAGVSKNIIGKAPSAAQLVRHLCGKGGGRDDMAQGGGGVPEDLNSKIKEIKEMIEKI</sequence>
<organism>
    <name type="scientific">Legionella pneumophila subsp. pneumophila (strain Philadelphia 1 / ATCC 33152 / DSM 7513)</name>
    <dbReference type="NCBI Taxonomy" id="272624"/>
    <lineage>
        <taxon>Bacteria</taxon>
        <taxon>Pseudomonadati</taxon>
        <taxon>Pseudomonadota</taxon>
        <taxon>Gammaproteobacteria</taxon>
        <taxon>Legionellales</taxon>
        <taxon>Legionellaceae</taxon>
        <taxon>Legionella</taxon>
    </lineage>
</organism>
<proteinExistence type="inferred from homology"/>
<protein>
    <recommendedName>
        <fullName evidence="1">Alanine--tRNA ligase</fullName>
        <ecNumber evidence="1">6.1.1.7</ecNumber>
    </recommendedName>
    <alternativeName>
        <fullName evidence="1">Alanyl-tRNA synthetase</fullName>
        <shortName evidence="1">AlaRS</shortName>
    </alternativeName>
</protein>
<feature type="chain" id="PRO_0000075134" description="Alanine--tRNA ligase">
    <location>
        <begin position="1"/>
        <end position="860"/>
    </location>
</feature>
<feature type="binding site" evidence="1">
    <location>
        <position position="553"/>
    </location>
    <ligand>
        <name>Zn(2+)</name>
        <dbReference type="ChEBI" id="CHEBI:29105"/>
    </ligand>
</feature>
<feature type="binding site" evidence="1">
    <location>
        <position position="557"/>
    </location>
    <ligand>
        <name>Zn(2+)</name>
        <dbReference type="ChEBI" id="CHEBI:29105"/>
    </ligand>
</feature>
<feature type="binding site" evidence="1">
    <location>
        <position position="655"/>
    </location>
    <ligand>
        <name>Zn(2+)</name>
        <dbReference type="ChEBI" id="CHEBI:29105"/>
    </ligand>
</feature>
<feature type="binding site" evidence="1">
    <location>
        <position position="659"/>
    </location>
    <ligand>
        <name>Zn(2+)</name>
        <dbReference type="ChEBI" id="CHEBI:29105"/>
    </ligand>
</feature>
<dbReference type="EC" id="6.1.1.7" evidence="1"/>
<dbReference type="EMBL" id="AE017354">
    <property type="protein sequence ID" value="AAU27878.1"/>
    <property type="molecule type" value="Genomic_DNA"/>
</dbReference>
<dbReference type="RefSeq" id="WP_010947525.1">
    <property type="nucleotide sequence ID" value="NC_002942.5"/>
</dbReference>
<dbReference type="RefSeq" id="YP_095825.1">
    <property type="nucleotide sequence ID" value="NC_002942.5"/>
</dbReference>
<dbReference type="SMR" id="Q5ZUJ9"/>
<dbReference type="STRING" id="272624.lpg1799"/>
<dbReference type="PaxDb" id="272624-lpg1799"/>
<dbReference type="GeneID" id="57035791"/>
<dbReference type="KEGG" id="lpn:lpg1799"/>
<dbReference type="PATRIC" id="fig|272624.6.peg.1887"/>
<dbReference type="eggNOG" id="COG0013">
    <property type="taxonomic scope" value="Bacteria"/>
</dbReference>
<dbReference type="HOGENOM" id="CLU_004485_1_1_6"/>
<dbReference type="OrthoDB" id="9803884at2"/>
<dbReference type="Proteomes" id="UP000000609">
    <property type="component" value="Chromosome"/>
</dbReference>
<dbReference type="GO" id="GO:0005829">
    <property type="term" value="C:cytosol"/>
    <property type="evidence" value="ECO:0007669"/>
    <property type="project" value="TreeGrafter"/>
</dbReference>
<dbReference type="GO" id="GO:0004813">
    <property type="term" value="F:alanine-tRNA ligase activity"/>
    <property type="evidence" value="ECO:0007669"/>
    <property type="project" value="UniProtKB-UniRule"/>
</dbReference>
<dbReference type="GO" id="GO:0002161">
    <property type="term" value="F:aminoacyl-tRNA deacylase activity"/>
    <property type="evidence" value="ECO:0007669"/>
    <property type="project" value="TreeGrafter"/>
</dbReference>
<dbReference type="GO" id="GO:0005524">
    <property type="term" value="F:ATP binding"/>
    <property type="evidence" value="ECO:0007669"/>
    <property type="project" value="UniProtKB-UniRule"/>
</dbReference>
<dbReference type="GO" id="GO:0000049">
    <property type="term" value="F:tRNA binding"/>
    <property type="evidence" value="ECO:0007669"/>
    <property type="project" value="UniProtKB-KW"/>
</dbReference>
<dbReference type="GO" id="GO:0008270">
    <property type="term" value="F:zinc ion binding"/>
    <property type="evidence" value="ECO:0007669"/>
    <property type="project" value="UniProtKB-UniRule"/>
</dbReference>
<dbReference type="GO" id="GO:0006419">
    <property type="term" value="P:alanyl-tRNA aminoacylation"/>
    <property type="evidence" value="ECO:0007669"/>
    <property type="project" value="UniProtKB-UniRule"/>
</dbReference>
<dbReference type="GO" id="GO:0045892">
    <property type="term" value="P:negative regulation of DNA-templated transcription"/>
    <property type="evidence" value="ECO:0007669"/>
    <property type="project" value="TreeGrafter"/>
</dbReference>
<dbReference type="CDD" id="cd00673">
    <property type="entry name" value="AlaRS_core"/>
    <property type="match status" value="1"/>
</dbReference>
<dbReference type="FunFam" id="2.40.30.130:FF:000001">
    <property type="entry name" value="Alanine--tRNA ligase"/>
    <property type="match status" value="1"/>
</dbReference>
<dbReference type="FunFam" id="3.10.310.40:FF:000001">
    <property type="entry name" value="Alanine--tRNA ligase"/>
    <property type="match status" value="1"/>
</dbReference>
<dbReference type="FunFam" id="3.30.54.20:FF:000001">
    <property type="entry name" value="Alanine--tRNA ligase"/>
    <property type="match status" value="1"/>
</dbReference>
<dbReference type="FunFam" id="3.30.930.10:FF:000004">
    <property type="entry name" value="Alanine--tRNA ligase"/>
    <property type="match status" value="1"/>
</dbReference>
<dbReference type="FunFam" id="3.30.980.10:FF:000004">
    <property type="entry name" value="Alanine--tRNA ligase, cytoplasmic"/>
    <property type="match status" value="1"/>
</dbReference>
<dbReference type="Gene3D" id="2.40.30.130">
    <property type="match status" value="1"/>
</dbReference>
<dbReference type="Gene3D" id="3.10.310.40">
    <property type="match status" value="1"/>
</dbReference>
<dbReference type="Gene3D" id="3.30.54.20">
    <property type="match status" value="1"/>
</dbReference>
<dbReference type="Gene3D" id="6.10.250.550">
    <property type="match status" value="1"/>
</dbReference>
<dbReference type="Gene3D" id="3.30.930.10">
    <property type="entry name" value="Bira Bifunctional Protein, Domain 2"/>
    <property type="match status" value="1"/>
</dbReference>
<dbReference type="Gene3D" id="3.30.980.10">
    <property type="entry name" value="Threonyl-trna Synthetase, Chain A, domain 2"/>
    <property type="match status" value="1"/>
</dbReference>
<dbReference type="HAMAP" id="MF_00036_B">
    <property type="entry name" value="Ala_tRNA_synth_B"/>
    <property type="match status" value="1"/>
</dbReference>
<dbReference type="InterPro" id="IPR045864">
    <property type="entry name" value="aa-tRNA-synth_II/BPL/LPL"/>
</dbReference>
<dbReference type="InterPro" id="IPR002318">
    <property type="entry name" value="Ala-tRNA-lgiase_IIc"/>
</dbReference>
<dbReference type="InterPro" id="IPR018162">
    <property type="entry name" value="Ala-tRNA-ligase_IIc_anticod-bd"/>
</dbReference>
<dbReference type="InterPro" id="IPR018165">
    <property type="entry name" value="Ala-tRNA-synth_IIc_core"/>
</dbReference>
<dbReference type="InterPro" id="IPR018164">
    <property type="entry name" value="Ala-tRNA-synth_IIc_N"/>
</dbReference>
<dbReference type="InterPro" id="IPR050058">
    <property type="entry name" value="Ala-tRNA_ligase"/>
</dbReference>
<dbReference type="InterPro" id="IPR023033">
    <property type="entry name" value="Ala_tRNA_ligase_euk/bac"/>
</dbReference>
<dbReference type="InterPro" id="IPR003156">
    <property type="entry name" value="DHHA1_dom"/>
</dbReference>
<dbReference type="InterPro" id="IPR018163">
    <property type="entry name" value="Thr/Ala-tRNA-synth_IIc_edit"/>
</dbReference>
<dbReference type="InterPro" id="IPR009000">
    <property type="entry name" value="Transl_B-barrel_sf"/>
</dbReference>
<dbReference type="InterPro" id="IPR012947">
    <property type="entry name" value="tRNA_SAD"/>
</dbReference>
<dbReference type="NCBIfam" id="TIGR00344">
    <property type="entry name" value="alaS"/>
    <property type="match status" value="1"/>
</dbReference>
<dbReference type="PANTHER" id="PTHR11777:SF9">
    <property type="entry name" value="ALANINE--TRNA LIGASE, CYTOPLASMIC"/>
    <property type="match status" value="1"/>
</dbReference>
<dbReference type="PANTHER" id="PTHR11777">
    <property type="entry name" value="ALANYL-TRNA SYNTHETASE"/>
    <property type="match status" value="1"/>
</dbReference>
<dbReference type="Pfam" id="PF02272">
    <property type="entry name" value="DHHA1"/>
    <property type="match status" value="1"/>
</dbReference>
<dbReference type="Pfam" id="PF01411">
    <property type="entry name" value="tRNA-synt_2c"/>
    <property type="match status" value="1"/>
</dbReference>
<dbReference type="Pfam" id="PF07973">
    <property type="entry name" value="tRNA_SAD"/>
    <property type="match status" value="1"/>
</dbReference>
<dbReference type="PRINTS" id="PR00980">
    <property type="entry name" value="TRNASYNTHALA"/>
</dbReference>
<dbReference type="SMART" id="SM00863">
    <property type="entry name" value="tRNA_SAD"/>
    <property type="match status" value="1"/>
</dbReference>
<dbReference type="SUPFAM" id="SSF55681">
    <property type="entry name" value="Class II aaRS and biotin synthetases"/>
    <property type="match status" value="1"/>
</dbReference>
<dbReference type="SUPFAM" id="SSF101353">
    <property type="entry name" value="Putative anticodon-binding domain of alanyl-tRNA synthetase (AlaRS)"/>
    <property type="match status" value="1"/>
</dbReference>
<dbReference type="SUPFAM" id="SSF55186">
    <property type="entry name" value="ThrRS/AlaRS common domain"/>
    <property type="match status" value="1"/>
</dbReference>
<dbReference type="SUPFAM" id="SSF50447">
    <property type="entry name" value="Translation proteins"/>
    <property type="match status" value="1"/>
</dbReference>
<dbReference type="PROSITE" id="PS50860">
    <property type="entry name" value="AA_TRNA_LIGASE_II_ALA"/>
    <property type="match status" value="1"/>
</dbReference>
<keyword id="KW-0030">Aminoacyl-tRNA synthetase</keyword>
<keyword id="KW-0067">ATP-binding</keyword>
<keyword id="KW-0963">Cytoplasm</keyword>
<keyword id="KW-0436">Ligase</keyword>
<keyword id="KW-0479">Metal-binding</keyword>
<keyword id="KW-0547">Nucleotide-binding</keyword>
<keyword id="KW-0648">Protein biosynthesis</keyword>
<keyword id="KW-1185">Reference proteome</keyword>
<keyword id="KW-0694">RNA-binding</keyword>
<keyword id="KW-0820">tRNA-binding</keyword>
<keyword id="KW-0862">Zinc</keyword>
<name>SYA_LEGPH</name>
<comment type="function">
    <text evidence="1">Catalyzes the attachment of alanine to tRNA(Ala) in a two-step reaction: alanine is first activated by ATP to form Ala-AMP and then transferred to the acceptor end of tRNA(Ala). Also edits incorrectly charged Ser-tRNA(Ala) and Gly-tRNA(Ala) via its editing domain.</text>
</comment>
<comment type="catalytic activity">
    <reaction evidence="1">
        <text>tRNA(Ala) + L-alanine + ATP = L-alanyl-tRNA(Ala) + AMP + diphosphate</text>
        <dbReference type="Rhea" id="RHEA:12540"/>
        <dbReference type="Rhea" id="RHEA-COMP:9657"/>
        <dbReference type="Rhea" id="RHEA-COMP:9923"/>
        <dbReference type="ChEBI" id="CHEBI:30616"/>
        <dbReference type="ChEBI" id="CHEBI:33019"/>
        <dbReference type="ChEBI" id="CHEBI:57972"/>
        <dbReference type="ChEBI" id="CHEBI:78442"/>
        <dbReference type="ChEBI" id="CHEBI:78497"/>
        <dbReference type="ChEBI" id="CHEBI:456215"/>
        <dbReference type="EC" id="6.1.1.7"/>
    </reaction>
</comment>
<comment type="cofactor">
    <cofactor evidence="1">
        <name>Zn(2+)</name>
        <dbReference type="ChEBI" id="CHEBI:29105"/>
    </cofactor>
    <text evidence="1">Binds 1 zinc ion per subunit.</text>
</comment>
<comment type="subcellular location">
    <subcellularLocation>
        <location evidence="1">Cytoplasm</location>
    </subcellularLocation>
</comment>
<comment type="domain">
    <text evidence="1">Consists of three domains; the N-terminal catalytic domain, the editing domain and the C-terminal C-Ala domain. The editing domain removes incorrectly charged amino acids, while the C-Ala domain, along with tRNA(Ala), serves as a bridge to cooperatively bring together the editing and aminoacylation centers thus stimulating deacylation of misacylated tRNAs.</text>
</comment>
<comment type="similarity">
    <text evidence="1">Belongs to the class-II aminoacyl-tRNA synthetase family.</text>
</comment>